<evidence type="ECO:0000250" key="1">
    <source>
        <dbReference type="UniProtKB" id="Q6PGB8"/>
    </source>
</evidence>
<evidence type="ECO:0000255" key="2">
    <source>
        <dbReference type="PROSITE-ProRule" id="PRU00541"/>
    </source>
</evidence>
<evidence type="ECO:0000255" key="3">
    <source>
        <dbReference type="PROSITE-ProRule" id="PRU00542"/>
    </source>
</evidence>
<evidence type="ECO:0000255" key="4">
    <source>
        <dbReference type="PROSITE-ProRule" id="PRU00624"/>
    </source>
</evidence>
<evidence type="ECO:0000256" key="5">
    <source>
        <dbReference type="SAM" id="MobiDB-lite"/>
    </source>
</evidence>
<evidence type="ECO:0000269" key="6">
    <source>
    </source>
</evidence>
<evidence type="ECO:0000269" key="7">
    <source>
    </source>
</evidence>
<evidence type="ECO:0000269" key="8">
    <source>
    </source>
</evidence>
<evidence type="ECO:0000269" key="9">
    <source>
    </source>
</evidence>
<evidence type="ECO:0000269" key="10">
    <source>
    </source>
</evidence>
<evidence type="ECO:0000269" key="11">
    <source>
    </source>
</evidence>
<evidence type="ECO:0000269" key="12">
    <source>
    </source>
</evidence>
<evidence type="ECO:0000269" key="13">
    <source>
    </source>
</evidence>
<evidence type="ECO:0000269" key="14">
    <source>
    </source>
</evidence>
<evidence type="ECO:0000303" key="15">
    <source>
    </source>
</evidence>
<evidence type="ECO:0000303" key="16">
    <source>
    </source>
</evidence>
<evidence type="ECO:0000303" key="17">
    <source>
    </source>
</evidence>
<evidence type="ECO:0000303" key="18">
    <source>
    </source>
</evidence>
<evidence type="ECO:0000305" key="19"/>
<evidence type="ECO:0000312" key="20">
    <source>
        <dbReference type="HGNC" id="HGNC:11097"/>
    </source>
</evidence>
<evidence type="ECO:0007744" key="21">
    <source>
    </source>
</evidence>
<evidence type="ECO:0007744" key="22">
    <source>
    </source>
</evidence>
<evidence type="ECO:0007744" key="23">
    <source>
    </source>
</evidence>
<gene>
    <name evidence="20" type="primary">SMARCA1</name>
    <name type="synonym">SNF2L</name>
    <name type="synonym">SNF2L1</name>
</gene>
<reference key="1">
    <citation type="journal article" date="1992" name="Nucleic Acids Res.">
        <title>Cloning of human and bovine homologs of SNF2/SWI2: a global activator of transcription in yeast S. cerevisiae.</title>
        <authorList>
            <person name="Okabe I."/>
            <person name="Bailey L.C."/>
            <person name="Attree O.F."/>
            <person name="Perkel J.M."/>
            <person name="Nelson D.L."/>
            <person name="Nussbaum R.L."/>
        </authorList>
    </citation>
    <scope>NUCLEOTIDE SEQUENCE [MRNA] (ISOFORM 2)</scope>
    <scope>VARIANT ARG-644</scope>
    <source>
        <tissue>Kidney</tissue>
    </source>
</reference>
<reference key="2">
    <citation type="journal article" date="2004" name="J. Biol. Chem.">
        <title>A tissue-specific, naturally occurring human SNF2L variant inactivates chromatin remodeling.</title>
        <authorList>
            <person name="Barak O."/>
            <person name="Lazzaro M.A."/>
            <person name="Cooch N.S."/>
            <person name="Picketts D.J."/>
            <person name="Shiekhattar R."/>
        </authorList>
    </citation>
    <scope>NUCLEOTIDE SEQUENCE [MRNA] (ISOFORM 1)</scope>
    <scope>FUNCTION</scope>
    <scope>CATALYTIC ACTIVITY</scope>
    <scope>SUBUNIT</scope>
    <scope>IDENTIFICATION IN A COMPLEX WITH BPFT; RBBP4 AND RBBP7</scope>
    <scope>INTERACTION WITH BPTF; RBBP4 AND RBBP7</scope>
    <scope>TISSUE SPECIFICITY</scope>
</reference>
<reference key="3">
    <citation type="journal article" date="2005" name="Nature">
        <title>The DNA sequence of the human X chromosome.</title>
        <authorList>
            <person name="Ross M.T."/>
            <person name="Grafham D.V."/>
            <person name="Coffey A.J."/>
            <person name="Scherer S."/>
            <person name="McLay K."/>
            <person name="Muzny D."/>
            <person name="Platzer M."/>
            <person name="Howell G.R."/>
            <person name="Burrows C."/>
            <person name="Bird C.P."/>
            <person name="Frankish A."/>
            <person name="Lovell F.L."/>
            <person name="Howe K.L."/>
            <person name="Ashurst J.L."/>
            <person name="Fulton R.S."/>
            <person name="Sudbrak R."/>
            <person name="Wen G."/>
            <person name="Jones M.C."/>
            <person name="Hurles M.E."/>
            <person name="Andrews T.D."/>
            <person name="Scott C.E."/>
            <person name="Searle S."/>
            <person name="Ramser J."/>
            <person name="Whittaker A."/>
            <person name="Deadman R."/>
            <person name="Carter N.P."/>
            <person name="Hunt S.E."/>
            <person name="Chen R."/>
            <person name="Cree A."/>
            <person name="Gunaratne P."/>
            <person name="Havlak P."/>
            <person name="Hodgson A."/>
            <person name="Metzker M.L."/>
            <person name="Richards S."/>
            <person name="Scott G."/>
            <person name="Steffen D."/>
            <person name="Sodergren E."/>
            <person name="Wheeler D.A."/>
            <person name="Worley K.C."/>
            <person name="Ainscough R."/>
            <person name="Ambrose K.D."/>
            <person name="Ansari-Lari M.A."/>
            <person name="Aradhya S."/>
            <person name="Ashwell R.I."/>
            <person name="Babbage A.K."/>
            <person name="Bagguley C.L."/>
            <person name="Ballabio A."/>
            <person name="Banerjee R."/>
            <person name="Barker G.E."/>
            <person name="Barlow K.F."/>
            <person name="Barrett I.P."/>
            <person name="Bates K.N."/>
            <person name="Beare D.M."/>
            <person name="Beasley H."/>
            <person name="Beasley O."/>
            <person name="Beck A."/>
            <person name="Bethel G."/>
            <person name="Blechschmidt K."/>
            <person name="Brady N."/>
            <person name="Bray-Allen S."/>
            <person name="Bridgeman A.M."/>
            <person name="Brown A.J."/>
            <person name="Brown M.J."/>
            <person name="Bonnin D."/>
            <person name="Bruford E.A."/>
            <person name="Buhay C."/>
            <person name="Burch P."/>
            <person name="Burford D."/>
            <person name="Burgess J."/>
            <person name="Burrill W."/>
            <person name="Burton J."/>
            <person name="Bye J.M."/>
            <person name="Carder C."/>
            <person name="Carrel L."/>
            <person name="Chako J."/>
            <person name="Chapman J.C."/>
            <person name="Chavez D."/>
            <person name="Chen E."/>
            <person name="Chen G."/>
            <person name="Chen Y."/>
            <person name="Chen Z."/>
            <person name="Chinault C."/>
            <person name="Ciccodicola A."/>
            <person name="Clark S.Y."/>
            <person name="Clarke G."/>
            <person name="Clee C.M."/>
            <person name="Clegg S."/>
            <person name="Clerc-Blankenburg K."/>
            <person name="Clifford K."/>
            <person name="Cobley V."/>
            <person name="Cole C.G."/>
            <person name="Conquer J.S."/>
            <person name="Corby N."/>
            <person name="Connor R.E."/>
            <person name="David R."/>
            <person name="Davies J."/>
            <person name="Davis C."/>
            <person name="Davis J."/>
            <person name="Delgado O."/>
            <person name="Deshazo D."/>
            <person name="Dhami P."/>
            <person name="Ding Y."/>
            <person name="Dinh H."/>
            <person name="Dodsworth S."/>
            <person name="Draper H."/>
            <person name="Dugan-Rocha S."/>
            <person name="Dunham A."/>
            <person name="Dunn M."/>
            <person name="Durbin K.J."/>
            <person name="Dutta I."/>
            <person name="Eades T."/>
            <person name="Ellwood M."/>
            <person name="Emery-Cohen A."/>
            <person name="Errington H."/>
            <person name="Evans K.L."/>
            <person name="Faulkner L."/>
            <person name="Francis F."/>
            <person name="Frankland J."/>
            <person name="Fraser A.E."/>
            <person name="Galgoczy P."/>
            <person name="Gilbert J."/>
            <person name="Gill R."/>
            <person name="Gloeckner G."/>
            <person name="Gregory S.G."/>
            <person name="Gribble S."/>
            <person name="Griffiths C."/>
            <person name="Grocock R."/>
            <person name="Gu Y."/>
            <person name="Gwilliam R."/>
            <person name="Hamilton C."/>
            <person name="Hart E.A."/>
            <person name="Hawes A."/>
            <person name="Heath P.D."/>
            <person name="Heitmann K."/>
            <person name="Hennig S."/>
            <person name="Hernandez J."/>
            <person name="Hinzmann B."/>
            <person name="Ho S."/>
            <person name="Hoffs M."/>
            <person name="Howden P.J."/>
            <person name="Huckle E.J."/>
            <person name="Hume J."/>
            <person name="Hunt P.J."/>
            <person name="Hunt A.R."/>
            <person name="Isherwood J."/>
            <person name="Jacob L."/>
            <person name="Johnson D."/>
            <person name="Jones S."/>
            <person name="de Jong P.J."/>
            <person name="Joseph S.S."/>
            <person name="Keenan S."/>
            <person name="Kelly S."/>
            <person name="Kershaw J.K."/>
            <person name="Khan Z."/>
            <person name="Kioschis P."/>
            <person name="Klages S."/>
            <person name="Knights A.J."/>
            <person name="Kosiura A."/>
            <person name="Kovar-Smith C."/>
            <person name="Laird G.K."/>
            <person name="Langford C."/>
            <person name="Lawlor S."/>
            <person name="Leversha M."/>
            <person name="Lewis L."/>
            <person name="Liu W."/>
            <person name="Lloyd C."/>
            <person name="Lloyd D.M."/>
            <person name="Loulseged H."/>
            <person name="Loveland J.E."/>
            <person name="Lovell J.D."/>
            <person name="Lozado R."/>
            <person name="Lu J."/>
            <person name="Lyne R."/>
            <person name="Ma J."/>
            <person name="Maheshwari M."/>
            <person name="Matthews L.H."/>
            <person name="McDowall J."/>
            <person name="McLaren S."/>
            <person name="McMurray A."/>
            <person name="Meidl P."/>
            <person name="Meitinger T."/>
            <person name="Milne S."/>
            <person name="Miner G."/>
            <person name="Mistry S.L."/>
            <person name="Morgan M."/>
            <person name="Morris S."/>
            <person name="Mueller I."/>
            <person name="Mullikin J.C."/>
            <person name="Nguyen N."/>
            <person name="Nordsiek G."/>
            <person name="Nyakatura G."/>
            <person name="O'dell C.N."/>
            <person name="Okwuonu G."/>
            <person name="Palmer S."/>
            <person name="Pandian R."/>
            <person name="Parker D."/>
            <person name="Parrish J."/>
            <person name="Pasternak S."/>
            <person name="Patel D."/>
            <person name="Pearce A.V."/>
            <person name="Pearson D.M."/>
            <person name="Pelan S.E."/>
            <person name="Perez L."/>
            <person name="Porter K.M."/>
            <person name="Ramsey Y."/>
            <person name="Reichwald K."/>
            <person name="Rhodes S."/>
            <person name="Ridler K.A."/>
            <person name="Schlessinger D."/>
            <person name="Schueler M.G."/>
            <person name="Sehra H.K."/>
            <person name="Shaw-Smith C."/>
            <person name="Shen H."/>
            <person name="Sheridan E.M."/>
            <person name="Shownkeen R."/>
            <person name="Skuce C.D."/>
            <person name="Smith M.L."/>
            <person name="Sotheran E.C."/>
            <person name="Steingruber H.E."/>
            <person name="Steward C.A."/>
            <person name="Storey R."/>
            <person name="Swann R.M."/>
            <person name="Swarbreck D."/>
            <person name="Tabor P.E."/>
            <person name="Taudien S."/>
            <person name="Taylor T."/>
            <person name="Teague B."/>
            <person name="Thomas K."/>
            <person name="Thorpe A."/>
            <person name="Timms K."/>
            <person name="Tracey A."/>
            <person name="Trevanion S."/>
            <person name="Tromans A.C."/>
            <person name="d'Urso M."/>
            <person name="Verduzco D."/>
            <person name="Villasana D."/>
            <person name="Waldron L."/>
            <person name="Wall M."/>
            <person name="Wang Q."/>
            <person name="Warren J."/>
            <person name="Warry G.L."/>
            <person name="Wei X."/>
            <person name="West A."/>
            <person name="Whitehead S.L."/>
            <person name="Whiteley M.N."/>
            <person name="Wilkinson J.E."/>
            <person name="Willey D.L."/>
            <person name="Williams G."/>
            <person name="Williams L."/>
            <person name="Williamson A."/>
            <person name="Williamson H."/>
            <person name="Wilming L."/>
            <person name="Woodmansey R.L."/>
            <person name="Wray P.W."/>
            <person name="Yen J."/>
            <person name="Zhang J."/>
            <person name="Zhou J."/>
            <person name="Zoghbi H."/>
            <person name="Zorilla S."/>
            <person name="Buck D."/>
            <person name="Reinhardt R."/>
            <person name="Poustka A."/>
            <person name="Rosenthal A."/>
            <person name="Lehrach H."/>
            <person name="Meindl A."/>
            <person name="Minx P.J."/>
            <person name="Hillier L.W."/>
            <person name="Willard H.F."/>
            <person name="Wilson R.K."/>
            <person name="Waterston R.H."/>
            <person name="Rice C.M."/>
            <person name="Vaudin M."/>
            <person name="Coulson A."/>
            <person name="Nelson D.L."/>
            <person name="Weinstock G."/>
            <person name="Sulston J.E."/>
            <person name="Durbin R.M."/>
            <person name="Hubbard T."/>
            <person name="Gibbs R.A."/>
            <person name="Beck S."/>
            <person name="Rogers J."/>
            <person name="Bentley D.R."/>
        </authorList>
    </citation>
    <scope>NUCLEOTIDE SEQUENCE [LARGE SCALE GENOMIC DNA]</scope>
</reference>
<reference key="4">
    <citation type="journal article" date="2004" name="Genome Res.">
        <title>The status, quality, and expansion of the NIH full-length cDNA project: the Mammalian Gene Collection (MGC).</title>
        <authorList>
            <consortium name="The MGC Project Team"/>
        </authorList>
    </citation>
    <scope>NUCLEOTIDE SEQUENCE [LARGE SCALE MRNA]</scope>
    <source>
        <tissue>Lung</tissue>
    </source>
</reference>
<reference key="5">
    <citation type="journal article" date="2002" name="Proteomics">
        <title>Identification of the phosphotyrosine proteome from thrombin activated platelets.</title>
        <authorList>
            <person name="Maguire P.B."/>
            <person name="Wynne K.J."/>
            <person name="Harney D.F."/>
            <person name="O'Donoghue N.M."/>
            <person name="Stephens G."/>
            <person name="Fitzgerald D.J."/>
        </authorList>
    </citation>
    <scope>PHOSPHORYLATION AT TYR-942</scope>
</reference>
<reference key="6">
    <citation type="journal article" date="2003" name="EMBO J.">
        <title>Isolation of human NURF: a regulator of Engrailed gene expression.</title>
        <authorList>
            <person name="Barak O."/>
            <person name="Lazzaro M.A."/>
            <person name="Lane W.S."/>
            <person name="Speicher D.W."/>
            <person name="Picketts D.J."/>
            <person name="Shiekhattar R."/>
        </authorList>
    </citation>
    <scope>FUNCTION</scope>
    <scope>CATALYTIC ACTIVITY</scope>
    <scope>IDENTIFICATION IN THE NURF-1 ISWI CHROMATIN REMODELING COMPLEX</scope>
    <scope>INTERACTION WITH BPTF; RBBP4 AND RBBP7</scope>
    <scope>MUTAGENESIS OF LYS-214</scope>
    <scope>IDENTIFICATION BY MASS SPECTROMETRY</scope>
</reference>
<reference key="7">
    <citation type="journal article" date="2005" name="Hum. Mol. Genet.">
        <title>CECR2, a protein involved in neurulation, forms a novel chromatin remodeling complex with SNF2L.</title>
        <authorList>
            <person name="Banting G.S."/>
            <person name="Barak O."/>
            <person name="Ames T.M."/>
            <person name="Burnham A.C."/>
            <person name="Kardel M.D."/>
            <person name="Cooch N.S."/>
            <person name="Davidson C.E."/>
            <person name="Godbout R."/>
            <person name="McDermid H.E."/>
            <person name="Shiekhattar R."/>
        </authorList>
    </citation>
    <scope>FUNCTION (ISOFORM 1)</scope>
    <scope>CATALYTIC ACTIVITY</scope>
    <scope>IDENTIFICATION IN THE CERF-1 ISWI CHROMATIN REMODELING COMPLEX</scope>
    <scope>IDENTIFICATION IN THE NURF-1 ISWI CHROMATIN REMODELING COMPLEX</scope>
    <scope>IDENTIFICATION IN THE RSF-1 ISWI CHROMATIN REMODELING COMPLEX</scope>
</reference>
<reference key="8">
    <citation type="journal article" date="2006" name="Cell">
        <title>Global, in vivo, and site-specific phosphorylation dynamics in signaling networks.</title>
        <authorList>
            <person name="Olsen J.V."/>
            <person name="Blagoev B."/>
            <person name="Gnad F."/>
            <person name="Macek B."/>
            <person name="Kumar C."/>
            <person name="Mortensen P."/>
            <person name="Mann M."/>
        </authorList>
    </citation>
    <scope>IDENTIFICATION BY MASS SPECTROMETRY [LARGE SCALE ANALYSIS]</scope>
    <source>
        <tissue>Cervix carcinoma</tissue>
    </source>
</reference>
<reference key="9">
    <citation type="journal article" date="2006" name="Mol. Endocrinol.">
        <title>The imitation switch protein SNF2L regulates steroidogenic acute regulatory protein expression during terminal differentiation of ovarian granulosa cells.</title>
        <authorList>
            <person name="Lazzaro M.A."/>
            <person name="Pepin D."/>
            <person name="Pescador N."/>
            <person name="Murphy B.D."/>
            <person name="Vanderhyden B.C."/>
            <person name="Picketts D.J."/>
        </authorList>
    </citation>
    <scope>FUNCTION</scope>
    <scope>INTERACTION WITH PRLR</scope>
</reference>
<reference key="10">
    <citation type="journal article" date="2009" name="Anal. Chem.">
        <title>Lys-N and trypsin cover complementary parts of the phosphoproteome in a refined SCX-based approach.</title>
        <authorList>
            <person name="Gauci S."/>
            <person name="Helbig A.O."/>
            <person name="Slijper M."/>
            <person name="Krijgsveld J."/>
            <person name="Heck A.J."/>
            <person name="Mohammed S."/>
        </authorList>
    </citation>
    <scope>IDENTIFICATION BY MASS SPECTROMETRY [LARGE SCALE ANALYSIS]</scope>
</reference>
<reference key="11">
    <citation type="journal article" date="2011" name="BMC Syst. Biol.">
        <title>Initial characterization of the human central proteome.</title>
        <authorList>
            <person name="Burkard T.R."/>
            <person name="Planyavsky M."/>
            <person name="Kaupe I."/>
            <person name="Breitwieser F.P."/>
            <person name="Buerckstuemmer T."/>
            <person name="Bennett K.L."/>
            <person name="Superti-Furga G."/>
            <person name="Colinge J."/>
        </authorList>
    </citation>
    <scope>IDENTIFICATION BY MASS SPECTROMETRY [LARGE SCALE ANALYSIS]</scope>
</reference>
<reference key="12">
    <citation type="journal article" date="2011" name="Sci. Signal.">
        <title>System-wide temporal characterization of the proteome and phosphoproteome of human embryonic stem cell differentiation.</title>
        <authorList>
            <person name="Rigbolt K.T."/>
            <person name="Prokhorova T.A."/>
            <person name="Akimov V."/>
            <person name="Henningsen J."/>
            <person name="Johansen P.T."/>
            <person name="Kratchmarova I."/>
            <person name="Kassem M."/>
            <person name="Mann M."/>
            <person name="Olsen J.V."/>
            <person name="Blagoev B."/>
        </authorList>
    </citation>
    <scope>PHOSPHORYLATION [LARGE SCALE ANALYSIS] AT SER-116 AND SER-119</scope>
    <scope>IDENTIFICATION BY MASS SPECTROMETRY [LARGE SCALE ANALYSIS]</scope>
</reference>
<reference key="13">
    <citation type="journal article" date="2014" name="J. Proteomics">
        <title>An enzyme assisted RP-RPLC approach for in-depth analysis of human liver phosphoproteome.</title>
        <authorList>
            <person name="Bian Y."/>
            <person name="Song C."/>
            <person name="Cheng K."/>
            <person name="Dong M."/>
            <person name="Wang F."/>
            <person name="Huang J."/>
            <person name="Sun D."/>
            <person name="Wang L."/>
            <person name="Ye M."/>
            <person name="Zou H."/>
        </authorList>
    </citation>
    <scope>IDENTIFICATION BY MASS SPECTROMETRY [LARGE SCALE ANALYSIS]</scope>
    <source>
        <tissue>Liver</tissue>
    </source>
</reference>
<reference key="14">
    <citation type="journal article" date="2015" name="Mol. Cell. Proteomics">
        <title>System-wide analysis of SUMOylation dynamics in response to replication stress reveals novel small ubiquitin-like modified target proteins and acceptor lysines relevant for genome stability.</title>
        <authorList>
            <person name="Xiao Z."/>
            <person name="Chang J.G."/>
            <person name="Hendriks I.A."/>
            <person name="Sigurdsson J.O."/>
            <person name="Olsen J.V."/>
            <person name="Vertegaal A.C."/>
        </authorList>
    </citation>
    <scope>SUMOYLATION [LARGE SCALE ANALYSIS] AT LYS-716</scope>
    <scope>IDENTIFICATION BY MASS SPECTROMETRY [LARGE SCALE ANALYSIS]</scope>
</reference>
<reference key="15">
    <citation type="journal article" date="2015" name="PLoS ONE">
        <title>Identification of Novel Proteins Co-Purifying with Cockayne Syndrome Group B (CSB) Reveals Potential Roles for CSB in RNA Metabolism and Chromatin Dynamics.</title>
        <authorList>
            <person name="Nicolai S."/>
            <person name="Filippi S."/>
            <person name="Caputo M."/>
            <person name="Cipak L."/>
            <person name="Gregan J."/>
            <person name="Ammerer G."/>
            <person name="Frontini M."/>
            <person name="Willems D."/>
            <person name="Prantera G."/>
            <person name="Balajee A.S."/>
            <person name="Proietti-De-Santis L."/>
        </authorList>
    </citation>
    <scope>INTERACTION WITH ERCC6</scope>
</reference>
<reference key="16">
    <citation type="journal article" date="2017" name="EMBO Rep.">
        <title>Expansion of the ISWI chromatin remodeler family with new active complexes.</title>
        <authorList>
            <person name="Oppikofer M."/>
            <person name="Bai T."/>
            <person name="Gan Y."/>
            <person name="Haley B."/>
            <person name="Liu P."/>
            <person name="Sandoval W."/>
            <person name="Ciferri C."/>
            <person name="Cochran A.G."/>
        </authorList>
    </citation>
    <scope>FUNCTION</scope>
    <scope>IDENTIFICATION IN THE BAZ1A-1-SMARCA1 COMPLEX</scope>
    <scope>IDENTIFICATION IN THE BAZ1B-1-SMARCA1 COMPLEX</scope>
    <scope>IDENTIFICATION IN THE ACF-1 ISWI CHROMATIN REMODELING COMPLEX</scope>
    <scope>IDENTIFICATION IN THE WICH-1 ISWI CHROMATIN REMODELING COMPLEX</scope>
    <scope>IDENTIFICATION IN THE NORC-1 ISWI CHROMATIN REMODELING COMPLEX</scope>
    <scope>IDENTIFICATION IN THE BRF-1 ISWI CHROMATIN REMODELING COMPLEX</scope>
    <scope>IDENTIFICATION IN THE NURF-1 ISWI CHROMATIN REMODELING COMPLEX</scope>
    <scope>IDENTIFICATION IN THE CERF-1 ISWI CHROMATIN REMODELING COMPLEX</scope>
    <scope>IDENTIFICATION IN THE RSF-1 ISWI CHROMATIN REMODELING COMPLEX</scope>
    <scope>INTERACTION WITH BPTF; RBBP4; RBBP7; BAZ1A; BAZ1B; BAZ2A; BAZ2B; CECR2 AND RSF1</scope>
    <scope>SUBCELLULAR LOCATION</scope>
</reference>
<reference key="17">
    <citation type="journal article" date="2017" name="Nat. Struct. Mol. Biol.">
        <title>Site-specific mapping of the human SUMO proteome reveals co-modification with phosphorylation.</title>
        <authorList>
            <person name="Hendriks I.A."/>
            <person name="Lyon D."/>
            <person name="Young C."/>
            <person name="Jensen L.J."/>
            <person name="Vertegaal A.C."/>
            <person name="Nielsen M.L."/>
        </authorList>
    </citation>
    <scope>SUMOYLATION [LARGE SCALE ANALYSIS] AT LYS-650; LYS-716 AND LYS-738</scope>
    <scope>IDENTIFICATION BY MASS SPECTROMETRY [LARGE SCALE ANALYSIS]</scope>
</reference>
<reference key="18">
    <citation type="journal article" date="2024" name="Nucleic Acids Res.">
        <title>SNF2L suppresses nascent DNA gap formation to promote DNA synthesis.</title>
        <authorList>
            <person name="Nelligan A."/>
            <person name="Dungrawala H."/>
        </authorList>
    </citation>
    <scope>FUNCTION</scope>
    <scope>SUBCELLULAR LOCATION</scope>
    <scope>MUTAGENESIS OF LYS-214</scope>
    <scope>CATALYTIC ACTIVITY</scope>
</reference>
<reference key="19">
    <citation type="journal article" date="2016" name="J. Med. Genet.">
        <title>Identification of novel genetic causes of Rett syndrome-like phenotypes.</title>
        <authorList>
            <person name="Lopes F."/>
            <person name="Barbosa M."/>
            <person name="Ameur A."/>
            <person name="Soares G."/>
            <person name="de Sa J."/>
            <person name="Dias A.I."/>
            <person name="Oliveira G."/>
            <person name="Cabral P."/>
            <person name="Temudo T."/>
            <person name="Calado E."/>
            <person name="Cruz I.F."/>
            <person name="Vieira J.P."/>
            <person name="Oliveira R."/>
            <person name="Esteves S."/>
            <person name="Sauer S."/>
            <person name="Jonasson I."/>
            <person name="Syvaenen A.C."/>
            <person name="Gyllensten U."/>
            <person name="Pinto D."/>
            <person name="Maciel P."/>
        </authorList>
    </citation>
    <scope>VARIANT VAL-966</scope>
</reference>
<protein>
    <recommendedName>
        <fullName evidence="19">SWI/SNF-related matrix-associated actin-dependent regulator of chromatin subfamily A member 1</fullName>
        <shortName>SMARCA1</shortName>
        <shortName>SWI/SNF-related matrix-associated actin-dependent regulator of chromatin A1</shortName>
        <ecNumber evidence="8 9 10 13 14">3.6.4.-</ecNumber>
    </recommendedName>
    <alternativeName>
        <fullName>Global transcription activator SNF2L1</fullName>
    </alternativeName>
    <alternativeName>
        <fullName evidence="15 16">Nucleosome-remodeling factor subunit SNF2L</fullName>
        <shortName evidence="15 16 17">SNF2L</shortName>
    </alternativeName>
    <alternativeName>
        <fullName evidence="20">SNF2 related chromatin remodeling ATPase 1</fullName>
    </alternativeName>
</protein>
<accession>P28370</accession>
<accession>Q5JV41</accession>
<accession>Q5JV42</accession>
<organism>
    <name type="scientific">Homo sapiens</name>
    <name type="common">Human</name>
    <dbReference type="NCBI Taxonomy" id="9606"/>
    <lineage>
        <taxon>Eukaryota</taxon>
        <taxon>Metazoa</taxon>
        <taxon>Chordata</taxon>
        <taxon>Craniata</taxon>
        <taxon>Vertebrata</taxon>
        <taxon>Euteleostomi</taxon>
        <taxon>Mammalia</taxon>
        <taxon>Eutheria</taxon>
        <taxon>Euarchontoglires</taxon>
        <taxon>Primates</taxon>
        <taxon>Haplorrhini</taxon>
        <taxon>Catarrhini</taxon>
        <taxon>Hominidae</taxon>
        <taxon>Homo</taxon>
    </lineage>
</organism>
<proteinExistence type="evidence at protein level"/>
<comment type="function">
    <molecule>Isoform 1</molecule>
    <text evidence="8 9 10 11 13 14">ATPase that possesses intrinsic ATP-dependent chromatin-remodeling activity (PubMed:14609955, PubMed:15310751, PubMed:15640247, PubMed:28801535). ATPase activity is substrate-dependent, and is increased when nucleosomes are the substrate, but is also catalytically active when DNA alone is the substrate (PubMed:14609955, PubMed:15310751, PubMed:15640247). Catalytic subunit of ISWI chromatin-remodeling complexes, which form ordered nucleosome arrays on chromatin and facilitate access to DNA during DNA-templated processes such as DNA replication, transcription, and repair (PubMed:14609955, PubMed:15310751, PubMed:15640247, PubMed:28801535). Within the ISWI chromatin-remodeling complexes, slides edge- and center-positioned histone octamers away from their original location on the DNA template (PubMed:28801535). Catalytic activity and histone octamer sliding propensity is regulated and determined by components of the ISWI chromatin-remodeling complexes (PubMed:28801535). The BAZ1A-, BAZ1B-, BAZ2A- and BAZ2B-containing ISWI chromatin-remodeling complexes regulate the spacing of nucleosomes along the chromatin and have the ability to slide mononucleosomes to the center of a DNA template (PubMed:28801535). The CECR2- and RSF1-containing ISWI chromatin-remodeling complexes do not have the ability to slide mononucleosomes to the center of a DNA template (PubMed:28801535). Within the NURF-1 and CERF-1 ISWI chromatin remodeling complexes, nucleosomes are the preferred substrate for its ATPase activity (PubMed:14609955, PubMed:15640247). Within the NURF-1 ISWI chromatin-remodeling complex, binds to the promoters of En1 and En2 to positively regulate their expression and promote brain development (PubMed:14609955). May promote neurite outgrowth (PubMed:14609955). May be involved in the development of luteal cells (PubMed:16740656). Facilitates nucleosome assembly during DNA replication, ensuring replication fork progression and genomic stability by preventing replication stress and nascent DNA gaps (PubMed:39413208).</text>
</comment>
<comment type="function">
    <molecule>Isoform 2</molecule>
    <text evidence="9 13">Catalytically inactive when either DNA or nucleosomes are the substrate and does not possess chromatin-remodeling activity (PubMed:15310751, PubMed:28801535). Acts as a negative regulator of chromatin remodelers by generating inactive complexes (PubMed:15310751).</text>
</comment>
<comment type="catalytic activity">
    <molecule>Isoform 1</molecule>
    <reaction evidence="8 9 10 13 14">
        <text>ATP + H2O = ADP + phosphate + H(+)</text>
        <dbReference type="Rhea" id="RHEA:13065"/>
        <dbReference type="ChEBI" id="CHEBI:15377"/>
        <dbReference type="ChEBI" id="CHEBI:15378"/>
        <dbReference type="ChEBI" id="CHEBI:30616"/>
        <dbReference type="ChEBI" id="CHEBI:43474"/>
        <dbReference type="ChEBI" id="CHEBI:456216"/>
    </reaction>
    <physiologicalReaction direction="left-to-right" evidence="19">
        <dbReference type="Rhea" id="RHEA:13066"/>
    </physiologicalReaction>
</comment>
<comment type="subunit">
    <molecule>Isoform 1</molecule>
    <text evidence="1 8 9 10 13">May form homodimers (PubMed:15310751). Component of the ACF-1 ISWI chromatin remodeling complex at least composed of SMARCA1 and BAZ1A, which regulates the spacing of histone octamers on the DNA template to facilitate access to DNA (PubMed:28801535). Within the complex interacts with BAZ1A; the interaction is direct (PubMed:28801535). Component of the WICH-1 ISWI chromatin remodeling complex at least composed of SMARCA1 and BAZ1B/WSTF (PubMed:28801535). Within the complex interacts with BAZ1B/WSTF (PubMed:28801535). Component of the NoRC-1 ISWI chromatin remodeling complex at least composed of SMARCA1 and BAZ2A/TIP5 (PubMed:28801535). Within the complex interacts with BAZ2A/TIP5 (PubMed:28801535). Component of the BRF-1 ISWI chromatin remodeling complex at least composed of SMARCA1 and BAZ2B (PubMed:28801535). Within the complex interacts with BAZ2B (PubMed:28801535). Component of the NURF-1 ISWI chromatin remodeling complex (also called the nucleosome-remodeling factor (NURF) complex) at least composed of SMARCA1, BPTF, RBBP4 and RBBP7 (PubMed:14609955, PubMed:15640247, PubMed:28801535). Within the complex interacts with BPTF (PubMed:14609955, PubMed:15310751, PubMed:28801535). Within the complex interacts with RBBP4 and RBBP7 (PubMed:14609955, PubMed:15310751). Component of the CERF-1 ISWI chromatin remodeling complex (also called the CECR2-containing-remodeling factor (CERF) complex) at least composed of CECR2 and SMARCA1 (PubMed:15640247, PubMed:28801535). LUZP1 is detected as part of the CERF-1 complex in embryonic stem cells where it is involved in complex stabilization but is not detected in the complex in the testis (By similarity). Component of the RSF-1 ISWI chromatin remodeling complex at least composed of SMARCA1 and RSF1 (PubMed:15640247, PubMed:28801535). Within the complex interacts with RSF1 (PubMed:28801535). Interacts with PRLR (PubMed:16740656). Interacts with ERCC6 (PubMed:26030138).</text>
</comment>
<comment type="subunit">
    <molecule>Isoform 2</molecule>
    <text evidence="9 13">May form homodimers (PubMed:15310751). Component of the BPFT-SMARCA1 complex at least composed of SMARCA1, BPFT, RBBP4 and RBBP7; the complex is catalytically inactive and does not remodel chromatin (PubMed:15310751). Within the complex interacts with BPTF, RBBP4 and RBBP7 (PubMed:15310751). Component of the BAZ1A-1-SMARCA1 complex at least composed of SMARCA1 and BAZ1A; the complex is catalytically inactive and does not remodel chromatin (PubMed:28801535). Component of the BAZ1B-1-SMARCA1 complex at least composed of SMARCA1 and BAZ1B; the complex is catalytically inactive and does not remodel chromatin (PubMed:28801535).</text>
</comment>
<comment type="interaction">
    <interactant intactId="EBI-2822460">
        <id>P28370</id>
    </interactant>
    <interactant intactId="EBI-927482">
        <id>Q9UIG0</id>
        <label>BAZ1B</label>
    </interactant>
    <organismsDiffer>false</organismsDiffer>
    <experiments>2</experiments>
</comment>
<comment type="interaction">
    <interactant intactId="EBI-2822460">
        <id>P28370</id>
    </interactant>
    <interactant intactId="EBI-1560273">
        <id>Q12830</id>
        <label>BPTF</label>
    </interactant>
    <organismsDiffer>false</organismsDiffer>
    <experiments>7</experiments>
</comment>
<comment type="subcellular location">
    <subcellularLocation>
        <location evidence="13 14">Nucleus</location>
    </subcellularLocation>
    <subcellularLocation>
        <location evidence="13 14">Chromosome</location>
    </subcellularLocation>
</comment>
<comment type="alternative products">
    <event type="alternative splicing"/>
    <isoform>
        <id>P28370-2</id>
        <name>1</name>
        <name evidence="18">SMARCA1</name>
        <name evidence="15">SNF2L</name>
        <sequence type="displayed"/>
    </isoform>
    <isoform>
        <id>P28370-1</id>
        <name>2</name>
        <name evidence="18">SMARCA1.13</name>
        <name evidence="15">SNF2L+13</name>
        <sequence type="described" ref="VSP_062586"/>
    </isoform>
</comment>
<comment type="tissue specificity">
    <molecule>Isoform 1</molecule>
    <text evidence="9">Expressed in lung, breast, kidney, ovary, skeletal muscle and brain.</text>
</comment>
<comment type="tissue specificity">
    <molecule>Isoform 2</molecule>
    <text evidence="9">Mainly expressed in non-neuronal tissues such as lung, breast, kidney, and ovary.</text>
</comment>
<comment type="miscellaneous">
    <molecule>Isoform 1</molecule>
    <text evidence="9 13">Active as an ATPase due to the absence of exon 13.</text>
</comment>
<comment type="miscellaneous">
    <molecule>Isoform 2</molecule>
    <text evidence="9 13">Inactive as an ATPase due to the presence of exon 13, but retains its ability to correctly fold and incorporate into complexes.</text>
</comment>
<comment type="similarity">
    <text evidence="19">Belongs to the SNF2/RAD54 helicase family. ISWI subfamily.</text>
</comment>
<comment type="caution">
    <text evidence="10">Like other proteins within the SNF2 family, they do not possess helicase activity but instead remodel chromatin via an ATP-dependent translocation mechanism.</text>
</comment>
<name>SMCA1_HUMAN</name>
<sequence length="1042" mass="121142">MEQDTAAVAATVAAADATATIVVIEDEQPGPSTSQEEGAAAAATEATAATEKGEKKKEKNVSSFQLKLAAKAPKSEKEMDPEYEEKMKADRAKRFEFLLKQTELFAHFIQPSAQKSPTSPLNMKLGRPRIKKDEKQSLISAGDYRHRRTEQEEDEELLSESRKTSNVCIRFEVSPSYVKGGPLRDYQIRGLNWLISLYENGVNGILADEMGLGKTLQTIALLGYLKHYRNIPGPHMVLVPKSTLHNWMNEFKRWVPSLRVICFVGDKDARAAFIRDEMMPGEWDVCVTSYEMVIKEKSVFKKFHWRYLVIDEAHRIKNEKSKLSEIVREFKSTNRLLLTGTPLQNNLHELWALLNFLLPDVFNSADDFDSWFDTKNCLGDQKLVERLHAVLKPFLLRRIKTDVEKSLPPKKEIKIYLGLSKMQREWYTKILMKDIDVLNSSGKMDKMRLLNILMQLRKCCNHPYLFDGAEPGPPYTTDEHIVSNSGKMVVLDKLLAKLKEQGSRVLIFSQMTRLLDILEDYCMWRGYEYCRLDGQTPHEEREEAIEAFNAPNSSKFIFMLSTRAGGLGINLASADVVILYDSDWNPQVDLQAMDRAHRIGQKKPVRVFRLITDNTVEERIVERAEIKLRLDSIVIQQGRLIDQQSNKLAKEEMLQMIRHGATHVFASKESELTDEDITTILERGEKKTAEMNERLQKMGESSLRNFRMDIEQSLYKFEGEDYREKQKLGMVEWIEPPKRERKANYAVDAYFREALRVSEPKIPKAPRPPKQPNVQDFQFFPPRLFELLEKEILYYRKTIGYKVPRNPDIPNPALAQREEQKKIDGAEPLTPEETEEKEKLLTQGFTNWTKRDFNQFIKANEKYGRDDIDNIAREVEGKSPEEVMEYSAVFWERCNELQDIEKIMAQIERGEARIQRRISIKKALDAKIARYKAPFHQLRIQYGTSKGKNYTEEEDRFLICMLHKMGFDRENVYEELRQCVRNAPQFRFDWFIKSRTAMEFQRRCNTLISLIEKENMEIEERERAEKKKRATKTPMVKFSAFS</sequence>
<feature type="chain" id="PRO_0000074351" description="SWI/SNF-related matrix-associated actin-dependent regulator of chromatin subfamily A member 1">
    <location>
        <begin position="1"/>
        <end position="1042"/>
    </location>
</feature>
<feature type="domain" description="Helicase ATP-binding" evidence="2">
    <location>
        <begin position="195"/>
        <end position="360"/>
    </location>
</feature>
<feature type="domain" description="Helicase C-terminal" evidence="3">
    <location>
        <begin position="490"/>
        <end position="641"/>
    </location>
</feature>
<feature type="domain" description="SANT 1" evidence="4">
    <location>
        <begin position="843"/>
        <end position="895"/>
    </location>
</feature>
<feature type="domain" description="SANT 2" evidence="4">
    <location>
        <begin position="946"/>
        <end position="1010"/>
    </location>
</feature>
<feature type="region of interest" description="Disordered" evidence="5">
    <location>
        <begin position="25"/>
        <end position="82"/>
    </location>
</feature>
<feature type="region of interest" description="Disordered" evidence="5">
    <location>
        <begin position="819"/>
        <end position="849"/>
    </location>
</feature>
<feature type="short sequence motif" description="DEAH box">
    <location>
        <begin position="311"/>
        <end position="314"/>
    </location>
</feature>
<feature type="compositionally biased region" description="Low complexity" evidence="5">
    <location>
        <begin position="36"/>
        <end position="50"/>
    </location>
</feature>
<feature type="compositionally biased region" description="Basic and acidic residues" evidence="5">
    <location>
        <begin position="51"/>
        <end position="60"/>
    </location>
</feature>
<feature type="compositionally biased region" description="Basic and acidic residues" evidence="5">
    <location>
        <begin position="73"/>
        <end position="82"/>
    </location>
</feature>
<feature type="compositionally biased region" description="Basic and acidic residues" evidence="5">
    <location>
        <begin position="828"/>
        <end position="837"/>
    </location>
</feature>
<feature type="binding site" evidence="2">
    <location>
        <begin position="208"/>
        <end position="215"/>
    </location>
    <ligand>
        <name>ATP</name>
        <dbReference type="ChEBI" id="CHEBI:30616"/>
    </ligand>
</feature>
<feature type="modified residue" description="Phosphoserine" evidence="21">
    <location>
        <position position="116"/>
    </location>
</feature>
<feature type="modified residue" description="Phosphoserine" evidence="21">
    <location>
        <position position="119"/>
    </location>
</feature>
<feature type="modified residue" description="Phosphotyrosine" evidence="6">
    <location>
        <position position="942"/>
    </location>
</feature>
<feature type="cross-link" description="Glycyl lysine isopeptide (Lys-Gly) (interchain with G-Cter in SUMO2)" evidence="23">
    <location>
        <position position="650"/>
    </location>
</feature>
<feature type="cross-link" description="Glycyl lysine isopeptide (Lys-Gly) (interchain with G-Cter in SUMO2)" evidence="22 23">
    <location>
        <position position="716"/>
    </location>
</feature>
<feature type="cross-link" description="Glycyl lysine isopeptide (Lys-Gly) (interchain with G-Cter in SUMO2)" evidence="23">
    <location>
        <position position="738"/>
    </location>
</feature>
<feature type="splice variant" id="VSP_062586" description="In isoform 2.">
    <original>E</original>
    <variation>EDKFLEVEFLGQR</variation>
    <location>
        <position position="542"/>
    </location>
</feature>
<feature type="sequence variant" id="VAR_001242" description="In dbSNP:rs1134838." evidence="7">
    <original>Q</original>
    <variation>R</variation>
    <location>
        <position position="644"/>
    </location>
</feature>
<feature type="sequence variant" id="VAR_079028" description="Found in a patient with Rett syndrome-like phenotype; uncertain significance." evidence="12">
    <original>G</original>
    <variation>V</variation>
    <location>
        <position position="966"/>
    </location>
</feature>
<feature type="mutagenesis site" description="Loss of ATPase activity. No effect on replication fork location." evidence="14">
    <original>K</original>
    <variation>A</variation>
    <location>
        <position position="214"/>
    </location>
</feature>
<feature type="mutagenesis site" description="No effect on neurite outgrowth." evidence="8">
    <original>K</original>
    <variation>R</variation>
    <location>
        <position position="214"/>
    </location>
</feature>
<dbReference type="EC" id="3.6.4.-" evidence="8 9 10 13 14"/>
<dbReference type="EMBL" id="M88163">
    <property type="protein sequence ID" value="AAA80559.1"/>
    <property type="molecule type" value="mRNA"/>
</dbReference>
<dbReference type="EMBL" id="M89907">
    <property type="protein sequence ID" value="AAA80560.1"/>
    <property type="molecule type" value="mRNA"/>
</dbReference>
<dbReference type="EMBL" id="AL022577">
    <property type="status" value="NOT_ANNOTATED_CDS"/>
    <property type="molecule type" value="Genomic_DNA"/>
</dbReference>
<dbReference type="EMBL" id="AL138745">
    <property type="status" value="NOT_ANNOTATED_CDS"/>
    <property type="molecule type" value="Genomic_DNA"/>
</dbReference>
<dbReference type="EMBL" id="BC117447">
    <property type="protein sequence ID" value="AAI17448.1"/>
    <property type="molecule type" value="mRNA"/>
</dbReference>
<dbReference type="CCDS" id="CCDS14612.1">
    <molecule id="P28370-1"/>
</dbReference>
<dbReference type="PIR" id="S35457">
    <property type="entry name" value="S35457"/>
</dbReference>
<dbReference type="PIR" id="S35458">
    <property type="entry name" value="S35458"/>
</dbReference>
<dbReference type="RefSeq" id="NP_001269804.1">
    <property type="nucleotide sequence ID" value="NM_001282875.1"/>
</dbReference>
<dbReference type="RefSeq" id="NP_001365191.1">
    <molecule id="P28370-2"/>
    <property type="nucleotide sequence ID" value="NM_001378262.1"/>
</dbReference>
<dbReference type="RefSeq" id="NP_001365192.1">
    <molecule id="P28370-2"/>
    <property type="nucleotide sequence ID" value="NM_001378263.1"/>
</dbReference>
<dbReference type="RefSeq" id="NP_003060.2">
    <molecule id="P28370-1"/>
    <property type="nucleotide sequence ID" value="NM_003069.4"/>
</dbReference>
<dbReference type="RefSeq" id="XP_005262518.1">
    <property type="nucleotide sequence ID" value="XM_005262461.2"/>
</dbReference>
<dbReference type="RefSeq" id="XP_006724845.1">
    <property type="nucleotide sequence ID" value="XM_006724782.2"/>
</dbReference>
<dbReference type="RefSeq" id="XP_016885239.1">
    <property type="nucleotide sequence ID" value="XM_017029750.1"/>
</dbReference>
<dbReference type="SMR" id="P28370"/>
<dbReference type="BioGRID" id="112478">
    <property type="interactions" value="189"/>
</dbReference>
<dbReference type="ComplexPortal" id="CPX-446">
    <property type="entry name" value="CERF chromatin remodelling complex, SMARCA1 variant"/>
</dbReference>
<dbReference type="ComplexPortal" id="CPX-688">
    <property type="entry name" value="NuRF chromatin remodeling complex"/>
</dbReference>
<dbReference type="CORUM" id="P28370"/>
<dbReference type="DIP" id="DIP-57685N"/>
<dbReference type="FunCoup" id="P28370">
    <property type="interactions" value="1752"/>
</dbReference>
<dbReference type="IntAct" id="P28370">
    <property type="interactions" value="96"/>
</dbReference>
<dbReference type="MINT" id="P28370"/>
<dbReference type="STRING" id="9606.ENSP00000360162"/>
<dbReference type="GlyGen" id="P28370">
    <property type="glycosylation" value="2 sites, 1 N-linked glycan (1 site), 1 O-linked glycan (1 site)"/>
</dbReference>
<dbReference type="iPTMnet" id="P28370"/>
<dbReference type="PhosphoSitePlus" id="P28370"/>
<dbReference type="SwissPalm" id="P28370"/>
<dbReference type="BioMuta" id="SMARCA1"/>
<dbReference type="DMDM" id="115311627"/>
<dbReference type="jPOST" id="P28370"/>
<dbReference type="MassIVE" id="P28370"/>
<dbReference type="PaxDb" id="9606-ENSP00000360162"/>
<dbReference type="PeptideAtlas" id="P28370"/>
<dbReference type="ProteomicsDB" id="54483">
    <molecule id="P28370-1"/>
</dbReference>
<dbReference type="ProteomicsDB" id="54484">
    <molecule id="P28370-2"/>
</dbReference>
<dbReference type="Pumba" id="P28370"/>
<dbReference type="Antibodypedia" id="518">
    <property type="antibodies" value="200 antibodies from 28 providers"/>
</dbReference>
<dbReference type="DNASU" id="6594"/>
<dbReference type="Ensembl" id="ENST00000371122.8">
    <molecule id="P28370-1"/>
    <property type="protein sequence ID" value="ENSP00000360163.4"/>
    <property type="gene ID" value="ENSG00000102038.16"/>
</dbReference>
<dbReference type="GeneID" id="6594"/>
<dbReference type="KEGG" id="hsa:6594"/>
<dbReference type="UCSC" id="uc004eun.6">
    <molecule id="P28370-1"/>
    <property type="organism name" value="human"/>
</dbReference>
<dbReference type="AGR" id="HGNC:11097"/>
<dbReference type="CTD" id="6594"/>
<dbReference type="DisGeNET" id="6594"/>
<dbReference type="GeneCards" id="SMARCA1"/>
<dbReference type="HGNC" id="HGNC:11097">
    <property type="gene designation" value="SMARCA1"/>
</dbReference>
<dbReference type="HPA" id="ENSG00000102038">
    <property type="expression patterns" value="Low tissue specificity"/>
</dbReference>
<dbReference type="MalaCards" id="SMARCA1"/>
<dbReference type="MIM" id="300012">
    <property type="type" value="gene"/>
</dbReference>
<dbReference type="neXtProt" id="NX_P28370"/>
<dbReference type="OpenTargets" id="ENSG00000102038"/>
<dbReference type="PharmGKB" id="PA35947"/>
<dbReference type="VEuPathDB" id="HostDB:ENSG00000102038"/>
<dbReference type="eggNOG" id="KOG0385">
    <property type="taxonomic scope" value="Eukaryota"/>
</dbReference>
<dbReference type="GeneTree" id="ENSGT00940000157297"/>
<dbReference type="HOGENOM" id="CLU_000315_0_2_1"/>
<dbReference type="InParanoid" id="P28370"/>
<dbReference type="OrthoDB" id="5857104at2759"/>
<dbReference type="PAN-GO" id="P28370">
    <property type="GO annotations" value="2 GO annotations based on evolutionary models"/>
</dbReference>
<dbReference type="PhylomeDB" id="P28370"/>
<dbReference type="TreeFam" id="TF300674"/>
<dbReference type="PathwayCommons" id="P28370"/>
<dbReference type="SignaLink" id="P28370"/>
<dbReference type="SIGNOR" id="P28370"/>
<dbReference type="BioGRID-ORCS" id="6594">
    <property type="hits" value="4 hits in 772 CRISPR screens"/>
</dbReference>
<dbReference type="CD-CODE" id="91857CE7">
    <property type="entry name" value="Nucleolus"/>
</dbReference>
<dbReference type="ChiTaRS" id="SMARCA1">
    <property type="organism name" value="human"/>
</dbReference>
<dbReference type="GeneWiki" id="SMARCA1"/>
<dbReference type="GenomeRNAi" id="6594"/>
<dbReference type="Pharos" id="P28370">
    <property type="development level" value="Tbio"/>
</dbReference>
<dbReference type="PRO" id="PR:P28370"/>
<dbReference type="Proteomes" id="UP000005640">
    <property type="component" value="Chromosome X"/>
</dbReference>
<dbReference type="RNAct" id="P28370">
    <property type="molecule type" value="protein"/>
</dbReference>
<dbReference type="Bgee" id="ENSG00000102038">
    <property type="expression patterns" value="Expressed in adrenal tissue and 211 other cell types or tissues"/>
</dbReference>
<dbReference type="ExpressionAtlas" id="P28370">
    <property type="expression patterns" value="baseline and differential"/>
</dbReference>
<dbReference type="GO" id="GO:1904949">
    <property type="term" value="C:ATPase complex"/>
    <property type="evidence" value="ECO:0000314"/>
    <property type="project" value="ComplexPortal"/>
</dbReference>
<dbReference type="GO" id="GO:0090537">
    <property type="term" value="C:CERF complex"/>
    <property type="evidence" value="ECO:0000314"/>
    <property type="project" value="MGI"/>
</dbReference>
<dbReference type="GO" id="GO:0000785">
    <property type="term" value="C:chromatin"/>
    <property type="evidence" value="ECO:0000318"/>
    <property type="project" value="GO_Central"/>
</dbReference>
<dbReference type="GO" id="GO:0043231">
    <property type="term" value="C:intracellular membrane-bounded organelle"/>
    <property type="evidence" value="ECO:0000314"/>
    <property type="project" value="HPA"/>
</dbReference>
<dbReference type="GO" id="GO:0005654">
    <property type="term" value="C:nucleoplasm"/>
    <property type="evidence" value="ECO:0000314"/>
    <property type="project" value="HPA"/>
</dbReference>
<dbReference type="GO" id="GO:0005634">
    <property type="term" value="C:nucleus"/>
    <property type="evidence" value="ECO:0000314"/>
    <property type="project" value="HGNC-UCL"/>
</dbReference>
<dbReference type="GO" id="GO:0016589">
    <property type="term" value="C:NURF complex"/>
    <property type="evidence" value="ECO:0000314"/>
    <property type="project" value="UniProtKB"/>
</dbReference>
<dbReference type="GO" id="GO:0005524">
    <property type="term" value="F:ATP binding"/>
    <property type="evidence" value="ECO:0007669"/>
    <property type="project" value="UniProtKB-KW"/>
</dbReference>
<dbReference type="GO" id="GO:0140658">
    <property type="term" value="F:ATP-dependent chromatin remodeler activity"/>
    <property type="evidence" value="ECO:0000314"/>
    <property type="project" value="MGI"/>
</dbReference>
<dbReference type="GO" id="GO:0036310">
    <property type="term" value="F:ATP-dependent DNA/DNA annealing activity"/>
    <property type="evidence" value="ECO:0000314"/>
    <property type="project" value="UniProtKB"/>
</dbReference>
<dbReference type="GO" id="GO:0003682">
    <property type="term" value="F:chromatin binding"/>
    <property type="evidence" value="ECO:0000318"/>
    <property type="project" value="GO_Central"/>
</dbReference>
<dbReference type="GO" id="GO:0003677">
    <property type="term" value="F:DNA binding"/>
    <property type="evidence" value="ECO:0000318"/>
    <property type="project" value="GO_Central"/>
</dbReference>
<dbReference type="GO" id="GO:0004386">
    <property type="term" value="F:helicase activity"/>
    <property type="evidence" value="ECO:0000304"/>
    <property type="project" value="ProtInc"/>
</dbReference>
<dbReference type="GO" id="GO:0016787">
    <property type="term" value="F:hydrolase activity"/>
    <property type="evidence" value="ECO:0007669"/>
    <property type="project" value="UniProtKB-KW"/>
</dbReference>
<dbReference type="GO" id="GO:0140750">
    <property type="term" value="F:nucleosome array spacer activity"/>
    <property type="evidence" value="ECO:0000318"/>
    <property type="project" value="GO_Central"/>
</dbReference>
<dbReference type="GO" id="GO:0031491">
    <property type="term" value="F:nucleosome binding"/>
    <property type="evidence" value="ECO:0007669"/>
    <property type="project" value="InterPro"/>
</dbReference>
<dbReference type="GO" id="GO:0061629">
    <property type="term" value="F:RNA polymerase II-specific DNA-binding transcription factor binding"/>
    <property type="evidence" value="ECO:0000353"/>
    <property type="project" value="ParkinsonsUK-UCL"/>
</dbReference>
<dbReference type="GO" id="GO:0007420">
    <property type="term" value="P:brain development"/>
    <property type="evidence" value="ECO:0000315"/>
    <property type="project" value="HGNC-UCL"/>
</dbReference>
<dbReference type="GO" id="GO:0006338">
    <property type="term" value="P:chromatin remodeling"/>
    <property type="evidence" value="ECO:0000314"/>
    <property type="project" value="HGNC-UCL"/>
</dbReference>
<dbReference type="GO" id="GO:0030182">
    <property type="term" value="P:neuron differentiation"/>
    <property type="evidence" value="ECO:0000250"/>
    <property type="project" value="HGNC"/>
</dbReference>
<dbReference type="GO" id="GO:0045893">
    <property type="term" value="P:positive regulation of DNA-templated transcription"/>
    <property type="evidence" value="ECO:0000315"/>
    <property type="project" value="HGNC-UCL"/>
</dbReference>
<dbReference type="GO" id="GO:0045944">
    <property type="term" value="P:positive regulation of transcription by RNA polymerase II"/>
    <property type="evidence" value="ECO:0000315"/>
    <property type="project" value="HGNC-UCL"/>
</dbReference>
<dbReference type="GO" id="GO:0006355">
    <property type="term" value="P:regulation of DNA-templated transcription"/>
    <property type="evidence" value="ECO:0000314"/>
    <property type="project" value="ComplexPortal"/>
</dbReference>
<dbReference type="CDD" id="cd18065">
    <property type="entry name" value="DEXHc_SMARCA1"/>
    <property type="match status" value="1"/>
</dbReference>
<dbReference type="CDD" id="cd00167">
    <property type="entry name" value="SANT"/>
    <property type="match status" value="1"/>
</dbReference>
<dbReference type="CDD" id="cd18793">
    <property type="entry name" value="SF2_C_SNF"/>
    <property type="match status" value="1"/>
</dbReference>
<dbReference type="FunFam" id="3.40.50.300:FF:000082">
    <property type="entry name" value="ISWI chromatin remodeling complex ATPase ISW1"/>
    <property type="match status" value="1"/>
</dbReference>
<dbReference type="FunFam" id="1.10.10.60:FF:000022">
    <property type="entry name" value="ISWI chromatin-remodeling complex ATPase CHR11 isoform A"/>
    <property type="match status" value="1"/>
</dbReference>
<dbReference type="FunFam" id="1.10.10.60:FF:000049">
    <property type="entry name" value="SWI/SNF-related matrix-associated actin-dependent regulator of chromatin subfamily A member"/>
    <property type="match status" value="1"/>
</dbReference>
<dbReference type="FunFam" id="1.10.1040.30:FF:000001">
    <property type="entry name" value="SWI/SNF-related matrix-associated actin-dependent regulator of chromatin subfamily A member"/>
    <property type="match status" value="1"/>
</dbReference>
<dbReference type="FunFam" id="1.20.5.1190:FF:000002">
    <property type="entry name" value="SWI/SNF-related matrix-associated actin-dependent regulator of chromatin subfamily A member"/>
    <property type="match status" value="1"/>
</dbReference>
<dbReference type="FunFam" id="3.40.50.10810:FF:000101">
    <property type="entry name" value="SWI/SNF-related, matrix-associated, actin-dependent regulator of"/>
    <property type="match status" value="1"/>
</dbReference>
<dbReference type="Gene3D" id="1.10.10.60">
    <property type="entry name" value="Homeodomain-like"/>
    <property type="match status" value="2"/>
</dbReference>
<dbReference type="Gene3D" id="1.20.5.1190">
    <property type="entry name" value="iswi atpase"/>
    <property type="match status" value="1"/>
</dbReference>
<dbReference type="Gene3D" id="1.10.1040.30">
    <property type="entry name" value="ISWI, HAND domain"/>
    <property type="match status" value="1"/>
</dbReference>
<dbReference type="Gene3D" id="3.40.50.300">
    <property type="entry name" value="P-loop containing nucleotide triphosphate hydrolases"/>
    <property type="match status" value="1"/>
</dbReference>
<dbReference type="Gene3D" id="3.40.50.10810">
    <property type="entry name" value="Tandem AAA-ATPase domain"/>
    <property type="match status" value="1"/>
</dbReference>
<dbReference type="InterPro" id="IPR014001">
    <property type="entry name" value="Helicase_ATP-bd"/>
</dbReference>
<dbReference type="InterPro" id="IPR001650">
    <property type="entry name" value="Helicase_C-like"/>
</dbReference>
<dbReference type="InterPro" id="IPR009057">
    <property type="entry name" value="Homeodomain-like_sf"/>
</dbReference>
<dbReference type="InterPro" id="IPR015194">
    <property type="entry name" value="ISWI_HAND-dom"/>
</dbReference>
<dbReference type="InterPro" id="IPR036306">
    <property type="entry name" value="ISWI_HAND-dom_sf"/>
</dbReference>
<dbReference type="InterPro" id="IPR027417">
    <property type="entry name" value="P-loop_NTPase"/>
</dbReference>
<dbReference type="InterPro" id="IPR001005">
    <property type="entry name" value="SANT/Myb"/>
</dbReference>
<dbReference type="InterPro" id="IPR017884">
    <property type="entry name" value="SANT_dom"/>
</dbReference>
<dbReference type="InterPro" id="IPR015195">
    <property type="entry name" value="SLIDE"/>
</dbReference>
<dbReference type="InterPro" id="IPR044755">
    <property type="entry name" value="SMARCA1_N"/>
</dbReference>
<dbReference type="InterPro" id="IPR038718">
    <property type="entry name" value="SNF2-like_sf"/>
</dbReference>
<dbReference type="InterPro" id="IPR049730">
    <property type="entry name" value="SNF2/RAD54-like_C"/>
</dbReference>
<dbReference type="InterPro" id="IPR000330">
    <property type="entry name" value="SNF2_N"/>
</dbReference>
<dbReference type="PANTHER" id="PTHR45623">
    <property type="entry name" value="CHROMODOMAIN-HELICASE-DNA-BINDING PROTEIN 3-RELATED-RELATED"/>
    <property type="match status" value="1"/>
</dbReference>
<dbReference type="PANTHER" id="PTHR45623:SF55">
    <property type="entry name" value="SWI_SNF RELATED, MATRIX ASSOCIATED, ACTIN DEPENDENT REGULATOR OF CHROMATIN, SUBFAMILY A, MEMBER 1"/>
    <property type="match status" value="1"/>
</dbReference>
<dbReference type="Pfam" id="PF09110">
    <property type="entry name" value="HAND"/>
    <property type="match status" value="1"/>
</dbReference>
<dbReference type="Pfam" id="PF00271">
    <property type="entry name" value="Helicase_C"/>
    <property type="match status" value="1"/>
</dbReference>
<dbReference type="Pfam" id="PF09111">
    <property type="entry name" value="SLIDE"/>
    <property type="match status" value="1"/>
</dbReference>
<dbReference type="Pfam" id="PF00176">
    <property type="entry name" value="SNF2-rel_dom"/>
    <property type="match status" value="1"/>
</dbReference>
<dbReference type="SMART" id="SM00487">
    <property type="entry name" value="DEXDc"/>
    <property type="match status" value="1"/>
</dbReference>
<dbReference type="SMART" id="SM00490">
    <property type="entry name" value="HELICc"/>
    <property type="match status" value="1"/>
</dbReference>
<dbReference type="SMART" id="SM00717">
    <property type="entry name" value="SANT"/>
    <property type="match status" value="2"/>
</dbReference>
<dbReference type="SUPFAM" id="SSF101224">
    <property type="entry name" value="HAND domain of the nucleosome remodeling ATPase ISWI"/>
    <property type="match status" value="1"/>
</dbReference>
<dbReference type="SUPFAM" id="SSF46689">
    <property type="entry name" value="Homeodomain-like"/>
    <property type="match status" value="2"/>
</dbReference>
<dbReference type="SUPFAM" id="SSF52540">
    <property type="entry name" value="P-loop containing nucleoside triphosphate hydrolases"/>
    <property type="match status" value="2"/>
</dbReference>
<dbReference type="PROSITE" id="PS51192">
    <property type="entry name" value="HELICASE_ATP_BIND_1"/>
    <property type="match status" value="1"/>
</dbReference>
<dbReference type="PROSITE" id="PS51194">
    <property type="entry name" value="HELICASE_CTER"/>
    <property type="match status" value="1"/>
</dbReference>
<dbReference type="PROSITE" id="PS51293">
    <property type="entry name" value="SANT"/>
    <property type="match status" value="1"/>
</dbReference>
<keyword id="KW-0010">Activator</keyword>
<keyword id="KW-0025">Alternative splicing</keyword>
<keyword id="KW-0156">Chromatin regulator</keyword>
<keyword id="KW-0158">Chromosome</keyword>
<keyword id="KW-0378">Hydrolase</keyword>
<keyword id="KW-1017">Isopeptide bond</keyword>
<keyword id="KW-0539">Nucleus</keyword>
<keyword id="KW-0597">Phosphoprotein</keyword>
<keyword id="KW-1267">Proteomics identification</keyword>
<keyword id="KW-1185">Reference proteome</keyword>
<keyword id="KW-0677">Repeat</keyword>
<keyword id="KW-0804">Transcription</keyword>
<keyword id="KW-0805">Transcription regulation</keyword>
<keyword id="KW-0832">Ubl conjugation</keyword>